<protein>
    <recommendedName>
        <fullName evidence="1">Dihydroorotate dehydrogenase (quinone)</fullName>
        <ecNumber evidence="1">1.3.5.2</ecNumber>
    </recommendedName>
    <alternativeName>
        <fullName evidence="1">DHOdehase</fullName>
        <shortName evidence="1">DHOD</shortName>
        <shortName evidence="1">DHODase</shortName>
    </alternativeName>
    <alternativeName>
        <fullName evidence="1">Dihydroorotate oxidase</fullName>
    </alternativeName>
</protein>
<evidence type="ECO:0000255" key="1">
    <source>
        <dbReference type="HAMAP-Rule" id="MF_00225"/>
    </source>
</evidence>
<comment type="function">
    <text evidence="1">Catalyzes the conversion of dihydroorotate to orotate with quinone as electron acceptor.</text>
</comment>
<comment type="catalytic activity">
    <reaction evidence="1">
        <text>(S)-dihydroorotate + a quinone = orotate + a quinol</text>
        <dbReference type="Rhea" id="RHEA:30187"/>
        <dbReference type="ChEBI" id="CHEBI:24646"/>
        <dbReference type="ChEBI" id="CHEBI:30839"/>
        <dbReference type="ChEBI" id="CHEBI:30864"/>
        <dbReference type="ChEBI" id="CHEBI:132124"/>
        <dbReference type="EC" id="1.3.5.2"/>
    </reaction>
</comment>
<comment type="cofactor">
    <cofactor evidence="1">
        <name>FMN</name>
        <dbReference type="ChEBI" id="CHEBI:58210"/>
    </cofactor>
    <text evidence="1">Binds 1 FMN per subunit.</text>
</comment>
<comment type="pathway">
    <text evidence="1">Pyrimidine metabolism; UMP biosynthesis via de novo pathway; orotate from (S)-dihydroorotate (quinone route): step 1/1.</text>
</comment>
<comment type="subunit">
    <text evidence="1">Monomer.</text>
</comment>
<comment type="subcellular location">
    <subcellularLocation>
        <location evidence="1">Cell membrane</location>
        <topology evidence="1">Peripheral membrane protein</topology>
    </subcellularLocation>
</comment>
<comment type="similarity">
    <text evidence="1">Belongs to the dihydroorotate dehydrogenase family. Type 2 subfamily.</text>
</comment>
<name>PYRD_ROSCS</name>
<reference key="1">
    <citation type="submission" date="2007-08" db="EMBL/GenBank/DDBJ databases">
        <title>Complete sequence of Roseiflexus castenholzii DSM 13941.</title>
        <authorList>
            <consortium name="US DOE Joint Genome Institute"/>
            <person name="Copeland A."/>
            <person name="Lucas S."/>
            <person name="Lapidus A."/>
            <person name="Barry K."/>
            <person name="Glavina del Rio T."/>
            <person name="Dalin E."/>
            <person name="Tice H."/>
            <person name="Pitluck S."/>
            <person name="Thompson L.S."/>
            <person name="Brettin T."/>
            <person name="Bruce D."/>
            <person name="Detter J.C."/>
            <person name="Han C."/>
            <person name="Tapia R."/>
            <person name="Schmutz J."/>
            <person name="Larimer F."/>
            <person name="Land M."/>
            <person name="Hauser L."/>
            <person name="Kyrpides N."/>
            <person name="Mikhailova N."/>
            <person name="Bryant D.A."/>
            <person name="Hanada S."/>
            <person name="Tsukatani Y."/>
            <person name="Richardson P."/>
        </authorList>
    </citation>
    <scope>NUCLEOTIDE SEQUENCE [LARGE SCALE GENOMIC DNA]</scope>
    <source>
        <strain>DSM 13941 / HLO8</strain>
    </source>
</reference>
<organism>
    <name type="scientific">Roseiflexus castenholzii (strain DSM 13941 / HLO8)</name>
    <dbReference type="NCBI Taxonomy" id="383372"/>
    <lineage>
        <taxon>Bacteria</taxon>
        <taxon>Bacillati</taxon>
        <taxon>Chloroflexota</taxon>
        <taxon>Chloroflexia</taxon>
        <taxon>Chloroflexales</taxon>
        <taxon>Roseiflexineae</taxon>
        <taxon>Roseiflexaceae</taxon>
        <taxon>Roseiflexus</taxon>
    </lineage>
</organism>
<feature type="chain" id="PRO_1000078163" description="Dihydroorotate dehydrogenase (quinone)">
    <location>
        <begin position="1"/>
        <end position="367"/>
    </location>
</feature>
<feature type="active site" description="Nucleophile" evidence="1">
    <location>
        <position position="181"/>
    </location>
</feature>
<feature type="binding site" evidence="1">
    <location>
        <begin position="67"/>
        <end position="71"/>
    </location>
    <ligand>
        <name>FMN</name>
        <dbReference type="ChEBI" id="CHEBI:58210"/>
    </ligand>
</feature>
<feature type="binding site" evidence="1">
    <location>
        <position position="71"/>
    </location>
    <ligand>
        <name>substrate</name>
    </ligand>
</feature>
<feature type="binding site" evidence="1">
    <location>
        <position position="91"/>
    </location>
    <ligand>
        <name>FMN</name>
        <dbReference type="ChEBI" id="CHEBI:58210"/>
    </ligand>
</feature>
<feature type="binding site" evidence="1">
    <location>
        <begin position="116"/>
        <end position="120"/>
    </location>
    <ligand>
        <name>substrate</name>
    </ligand>
</feature>
<feature type="binding site" evidence="1">
    <location>
        <position position="145"/>
    </location>
    <ligand>
        <name>FMN</name>
        <dbReference type="ChEBI" id="CHEBI:58210"/>
    </ligand>
</feature>
<feature type="binding site" evidence="1">
    <location>
        <position position="178"/>
    </location>
    <ligand>
        <name>FMN</name>
        <dbReference type="ChEBI" id="CHEBI:58210"/>
    </ligand>
</feature>
<feature type="binding site" evidence="1">
    <location>
        <position position="178"/>
    </location>
    <ligand>
        <name>substrate</name>
    </ligand>
</feature>
<feature type="binding site" evidence="1">
    <location>
        <position position="183"/>
    </location>
    <ligand>
        <name>substrate</name>
    </ligand>
</feature>
<feature type="binding site" evidence="1">
    <location>
        <position position="219"/>
    </location>
    <ligand>
        <name>FMN</name>
        <dbReference type="ChEBI" id="CHEBI:58210"/>
    </ligand>
</feature>
<feature type="binding site" evidence="1">
    <location>
        <position position="247"/>
    </location>
    <ligand>
        <name>FMN</name>
        <dbReference type="ChEBI" id="CHEBI:58210"/>
    </ligand>
</feature>
<feature type="binding site" evidence="1">
    <location>
        <begin position="248"/>
        <end position="249"/>
    </location>
    <ligand>
        <name>substrate</name>
    </ligand>
</feature>
<feature type="binding site" evidence="1">
    <location>
        <position position="269"/>
    </location>
    <ligand>
        <name>FMN</name>
        <dbReference type="ChEBI" id="CHEBI:58210"/>
    </ligand>
</feature>
<feature type="binding site" evidence="1">
    <location>
        <position position="298"/>
    </location>
    <ligand>
        <name>FMN</name>
        <dbReference type="ChEBI" id="CHEBI:58210"/>
    </ligand>
</feature>
<feature type="binding site" evidence="1">
    <location>
        <begin position="319"/>
        <end position="320"/>
    </location>
    <ligand>
        <name>FMN</name>
        <dbReference type="ChEBI" id="CHEBI:58210"/>
    </ligand>
</feature>
<proteinExistence type="inferred from homology"/>
<sequence>MLYHLIRPLLFRLDAERAHDVVTAMFRATSRMPLLPRLISALYAWDDPALMVEWAGLRFASPLGVAAGFDKRADLVDALALLGFSHVEVGTVTPRPQPGNPGPRLFRLPEDMALINRLGFNSHGMVAVAKALRARRSRRVIVGVNIGKNRDTPLERAVEDYAATFVALAPLADYVAVNISSPNTPGLRRLHERAALEELLRELMRLNHGLLYPRPIALKISPDETLDQIEEVVRAGCEAGVAAFIATNTTLAREGLRSRLANETGGLSGRPLAPRARQVIRAIYRLTRGTPPVIGVGGVLTADDAYAHIRAGARLVQLYTGMVYAGPAIAREIKRGLAQLLRRDGFVSVTQATGVDAEWEGAIRQRG</sequence>
<keyword id="KW-1003">Cell membrane</keyword>
<keyword id="KW-0285">Flavoprotein</keyword>
<keyword id="KW-0288">FMN</keyword>
<keyword id="KW-0472">Membrane</keyword>
<keyword id="KW-0560">Oxidoreductase</keyword>
<keyword id="KW-0665">Pyrimidine biosynthesis</keyword>
<keyword id="KW-1185">Reference proteome</keyword>
<gene>
    <name evidence="1" type="primary">pyrD</name>
    <name type="ordered locus">Rcas_2437</name>
</gene>
<accession>A7NLW9</accession>
<dbReference type="EC" id="1.3.5.2" evidence="1"/>
<dbReference type="EMBL" id="CP000804">
    <property type="protein sequence ID" value="ABU58517.1"/>
    <property type="molecule type" value="Genomic_DNA"/>
</dbReference>
<dbReference type="RefSeq" id="WP_012120941.1">
    <property type="nucleotide sequence ID" value="NC_009767.1"/>
</dbReference>
<dbReference type="SMR" id="A7NLW9"/>
<dbReference type="STRING" id="383372.Rcas_2437"/>
<dbReference type="KEGG" id="rca:Rcas_2437"/>
<dbReference type="eggNOG" id="COG0167">
    <property type="taxonomic scope" value="Bacteria"/>
</dbReference>
<dbReference type="HOGENOM" id="CLU_013640_2_0_0"/>
<dbReference type="OrthoDB" id="9802377at2"/>
<dbReference type="UniPathway" id="UPA00070">
    <property type="reaction ID" value="UER00946"/>
</dbReference>
<dbReference type="Proteomes" id="UP000000263">
    <property type="component" value="Chromosome"/>
</dbReference>
<dbReference type="GO" id="GO:0005737">
    <property type="term" value="C:cytoplasm"/>
    <property type="evidence" value="ECO:0007669"/>
    <property type="project" value="InterPro"/>
</dbReference>
<dbReference type="GO" id="GO:0005886">
    <property type="term" value="C:plasma membrane"/>
    <property type="evidence" value="ECO:0007669"/>
    <property type="project" value="UniProtKB-SubCell"/>
</dbReference>
<dbReference type="GO" id="GO:0106430">
    <property type="term" value="F:dihydroorotate dehydrogenase (quinone) activity"/>
    <property type="evidence" value="ECO:0007669"/>
    <property type="project" value="UniProtKB-EC"/>
</dbReference>
<dbReference type="GO" id="GO:0006207">
    <property type="term" value="P:'de novo' pyrimidine nucleobase biosynthetic process"/>
    <property type="evidence" value="ECO:0007669"/>
    <property type="project" value="InterPro"/>
</dbReference>
<dbReference type="GO" id="GO:0044205">
    <property type="term" value="P:'de novo' UMP biosynthetic process"/>
    <property type="evidence" value="ECO:0007669"/>
    <property type="project" value="UniProtKB-UniRule"/>
</dbReference>
<dbReference type="CDD" id="cd04738">
    <property type="entry name" value="DHOD_2_like"/>
    <property type="match status" value="1"/>
</dbReference>
<dbReference type="Gene3D" id="3.20.20.70">
    <property type="entry name" value="Aldolase class I"/>
    <property type="match status" value="1"/>
</dbReference>
<dbReference type="HAMAP" id="MF_00225">
    <property type="entry name" value="DHO_dh_type2"/>
    <property type="match status" value="1"/>
</dbReference>
<dbReference type="InterPro" id="IPR013785">
    <property type="entry name" value="Aldolase_TIM"/>
</dbReference>
<dbReference type="InterPro" id="IPR050074">
    <property type="entry name" value="DHO_dehydrogenase"/>
</dbReference>
<dbReference type="InterPro" id="IPR005719">
    <property type="entry name" value="Dihydroorotate_DH_2"/>
</dbReference>
<dbReference type="InterPro" id="IPR005720">
    <property type="entry name" value="Dihydroorotate_DH_cat"/>
</dbReference>
<dbReference type="InterPro" id="IPR001295">
    <property type="entry name" value="Dihydroorotate_DH_CS"/>
</dbReference>
<dbReference type="NCBIfam" id="NF003645">
    <property type="entry name" value="PRK05286.1-2"/>
    <property type="match status" value="1"/>
</dbReference>
<dbReference type="NCBIfam" id="NF003652">
    <property type="entry name" value="PRK05286.2-5"/>
    <property type="match status" value="1"/>
</dbReference>
<dbReference type="NCBIfam" id="TIGR01036">
    <property type="entry name" value="pyrD_sub2"/>
    <property type="match status" value="1"/>
</dbReference>
<dbReference type="PANTHER" id="PTHR48109:SF4">
    <property type="entry name" value="DIHYDROOROTATE DEHYDROGENASE (QUINONE), MITOCHONDRIAL"/>
    <property type="match status" value="1"/>
</dbReference>
<dbReference type="PANTHER" id="PTHR48109">
    <property type="entry name" value="DIHYDROOROTATE DEHYDROGENASE (QUINONE), MITOCHONDRIAL-RELATED"/>
    <property type="match status" value="1"/>
</dbReference>
<dbReference type="Pfam" id="PF01180">
    <property type="entry name" value="DHO_dh"/>
    <property type="match status" value="1"/>
</dbReference>
<dbReference type="SUPFAM" id="SSF51395">
    <property type="entry name" value="FMN-linked oxidoreductases"/>
    <property type="match status" value="1"/>
</dbReference>
<dbReference type="PROSITE" id="PS00911">
    <property type="entry name" value="DHODEHASE_1"/>
    <property type="match status" value="1"/>
</dbReference>
<dbReference type="PROSITE" id="PS00912">
    <property type="entry name" value="DHODEHASE_2"/>
    <property type="match status" value="1"/>
</dbReference>